<name>LPHN_DROSE</name>
<sequence>MLPTILSISYEHISLDLSKYQTAYACEGKKLTIECDPGDVINLIRANYGRFSITICNDHGNVEWSVNCMFPKSLSVLNSRCAHKQSCGVLAATSMFGDPCPGTHKYLEAHYQCISAAQTSTTTNRPSPPPWVLSNGPPIFGNGSGLIHPPGVGAGAPPPPRLPTLPGVVGISGNPGLFNVPPQHTAVTHSTPWSSTTAVGGGRLKGGATSTTTTKHPAGRHDGLPPPPQLHHHHNHHGEDTASPTKPSSKLPAGGNVTSPSNTRILTGVGGSGTDDGTLLTTKSSPNRPPGTAASGSVAGNSSVVRTINNINLNAAGMSGGDDESKLFCGPTHARNLYWNMTRVGDVNVQPCPGGAAGIAKWRCVLMKRMPDSGYDEYDDDASSTTPAPSGGDCLHNSSSCEPPVSMAHKVNQRLRNFEPTWHPATPDLTQCRSLWLNNLEMRVNQRDSSLISIANDMSEVTSSKTLYGGDMLVTTKIIQTVSEKMMHDKETFPDQRQREAMIMELLHCVVKTGSNLLDESQLSSWLDLNPEDQMRVATSLLTGLEYNAFLLADTISGSAVWCKKSKIYSSVVFPDTDQWPLSSDRIELPRAALIDNSEGGLVRIVFAAFDRLESILKPSYDHFDLKSSRSYVRNTAILSNDSDVNAGEIQQRLRILNSKVISASLGKGRHIQLSQPITLTLKHLKTENVTNPTCVFWNYIDHAWSANGCSLESTNRTHSVCSCNHLTNFAILMDVVDEHQHSLFTMFDGNMRIFIYISIGICVVFIVIALLTLKLFNGVFVKSARTSIYTSIYLCLLAIELLFLLGIEQTETSIFCGFITIFLHCAILSGTAWFCYEAFHSYSTLTSDELLLEVDQTPKVNCYYLLSYGLSLSVVAISLVIDPSTYTQNDYCVLMEANALFYATFVVPVLVFFVAAIGYTFLSWIIMCRKSRTGLKTKEHTRLASVRFDIRCSFVFLLLLSAVWCSAYFYLRGAKMDDDTADVYGYCFICFNTLLGLYIFVFHCIQNEKIRREYRKYVRQHAWLPKCLRCSKTSISSGIVTGNGPTAGTLCSVSTSKKPKLPLGVSEEAHDDPQQQQQTPVPITEDAIMGATSDCELNEAQQRRTLKSGLMTGTLQAPTQTLGGHVVLERGSTLRSTGHASPTSSAGSTHLIFAHKQQQQQQQQGPLGESYYHQPDYYSWKQPSTGTGGLKTPREYYNNAGAAASSPQQAHEVFYWTQKPNSGQHGKKKRGAGGVPASPSGSLHSRTAAASQVLFYPSYKKTKPGQPTGYPQYAEALDPPLATGNAAAYYQQQQQLRRQQLHQQQQQLSSDEEQAEQHAHLLHLQRRAGSQQQLPAPPPHMAQYQQEFMQRQYRNKHSNCDLGMGDAYYNQGSVGGADGGPVYEEILSNRNSDVQHYEVGDFDVDEVYNNSVGTGVFNNMRAAVAAGGSRYGGGSLSGGSVSSRSQQQQLKKQQQQQSLAQQRSVRRCTADDDDDEDEEEDEEATAAEQLHDSVCDEDEEEDESDLEHDAHGLPPQSDERMRRLMAMQDEDFKRRFQRQLRKHGAPLDYGALPPGAGPQPEHNGAVFGVSGGVGEGSMRGAFRQQQQQQALNAKSPGGRLAVNELFGHGNSGPPLPPANQTPAQKRQQLQKLSPQSTTSSSSHTSHSNPNLHPHQLTHPHPHQHPPHHQQRHLSAMLDENNTVRCYLEPLAK</sequence>
<accession>B4HS00</accession>
<protein>
    <recommendedName>
        <fullName evidence="1">Latrophilin Cirl</fullName>
    </recommendedName>
</protein>
<gene>
    <name evidence="1" type="primary">Cirl</name>
    <name type="ORF">GM21049</name>
</gene>
<evidence type="ECO:0000250" key="1">
    <source>
        <dbReference type="UniProtKB" id="A1Z7G7"/>
    </source>
</evidence>
<evidence type="ECO:0000250" key="2">
    <source>
        <dbReference type="UniProtKB" id="O88923"/>
    </source>
</evidence>
<evidence type="ECO:0000255" key="3"/>
<evidence type="ECO:0000255" key="4">
    <source>
        <dbReference type="PROSITE-ProRule" id="PRU00098"/>
    </source>
</evidence>
<evidence type="ECO:0000255" key="5">
    <source>
        <dbReference type="PROSITE-ProRule" id="PRU00260"/>
    </source>
</evidence>
<evidence type="ECO:0000256" key="6">
    <source>
        <dbReference type="SAM" id="MobiDB-lite"/>
    </source>
</evidence>
<evidence type="ECO:0000305" key="7"/>
<evidence type="ECO:0000312" key="8">
    <source>
        <dbReference type="EMBL" id="EDW46963.1"/>
    </source>
</evidence>
<organism>
    <name type="scientific">Drosophila sechellia</name>
    <name type="common">Fruit fly</name>
    <dbReference type="NCBI Taxonomy" id="7238"/>
    <lineage>
        <taxon>Eukaryota</taxon>
        <taxon>Metazoa</taxon>
        <taxon>Ecdysozoa</taxon>
        <taxon>Arthropoda</taxon>
        <taxon>Hexapoda</taxon>
        <taxon>Insecta</taxon>
        <taxon>Pterygota</taxon>
        <taxon>Neoptera</taxon>
        <taxon>Endopterygota</taxon>
        <taxon>Diptera</taxon>
        <taxon>Brachycera</taxon>
        <taxon>Muscomorpha</taxon>
        <taxon>Ephydroidea</taxon>
        <taxon>Drosophilidae</taxon>
        <taxon>Drosophila</taxon>
        <taxon>Sophophora</taxon>
    </lineage>
</organism>
<comment type="subunit">
    <text evidence="2">Forms a heterodimer, consisting of a large extracellular region non-covalently linked to a seven-transmembrane moiety.</text>
</comment>
<comment type="subcellular location">
    <subcellularLocation>
        <location evidence="3">Cell membrane</location>
        <topology evidence="2 3">Multi-pass membrane protein</topology>
    </subcellularLocation>
</comment>
<comment type="PTM">
    <text evidence="2">Proteolytically cleaved into 2 subunits, an extracellular subunit and a seven-transmembrane subunit.</text>
</comment>
<comment type="similarity">
    <text evidence="3">Belongs to the G-protein coupled receptor 2 family. LN-TM7 subfamily.</text>
</comment>
<comment type="sequence caution" evidence="7">
    <conflict type="erroneous gene model prediction">
        <sequence resource="EMBL-CDS" id="EDW46963"/>
    </conflict>
</comment>
<dbReference type="EMBL" id="CH480816">
    <property type="protein sequence ID" value="EDW46963.1"/>
    <property type="status" value="ALT_SEQ"/>
    <property type="molecule type" value="Genomic_DNA"/>
</dbReference>
<dbReference type="RefSeq" id="XP_002032950.1">
    <property type="nucleotide sequence ID" value="XM_002032914.1"/>
</dbReference>
<dbReference type="SMR" id="B4HS00"/>
<dbReference type="STRING" id="7238.B4HS00"/>
<dbReference type="GlyCosmos" id="B4HS00">
    <property type="glycosylation" value="8 sites, No reported glycans"/>
</dbReference>
<dbReference type="EnsemblMetazoa" id="FBtr0204034">
    <property type="protein sequence ID" value="FBpp0202526"/>
    <property type="gene ID" value="FBgn0175930"/>
</dbReference>
<dbReference type="EnsemblMetazoa" id="XM_032716269.1">
    <property type="protein sequence ID" value="XP_032572160.1"/>
    <property type="gene ID" value="LOC6608205"/>
</dbReference>
<dbReference type="ChiTaRS" id="Cirl">
    <property type="organism name" value="fly"/>
</dbReference>
<dbReference type="Proteomes" id="UP000001292">
    <property type="component" value="Unassembled WGS sequence"/>
</dbReference>
<dbReference type="GO" id="GO:0005886">
    <property type="term" value="C:plasma membrane"/>
    <property type="evidence" value="ECO:0007669"/>
    <property type="project" value="UniProtKB-SubCell"/>
</dbReference>
<dbReference type="GO" id="GO:0030246">
    <property type="term" value="F:carbohydrate binding"/>
    <property type="evidence" value="ECO:0007669"/>
    <property type="project" value="UniProtKB-KW"/>
</dbReference>
<dbReference type="GO" id="GO:0004930">
    <property type="term" value="F:G protein-coupled receptor activity"/>
    <property type="evidence" value="ECO:0007669"/>
    <property type="project" value="UniProtKB-KW"/>
</dbReference>
<dbReference type="GO" id="GO:0140897">
    <property type="term" value="F:mechanoreceptor activity"/>
    <property type="evidence" value="ECO:0007669"/>
    <property type="project" value="EnsemblMetazoa"/>
</dbReference>
<dbReference type="GO" id="GO:0008344">
    <property type="term" value="P:adult locomotory behavior"/>
    <property type="evidence" value="ECO:0007669"/>
    <property type="project" value="EnsemblMetazoa"/>
</dbReference>
<dbReference type="GO" id="GO:0007166">
    <property type="term" value="P:cell surface receptor signaling pathway"/>
    <property type="evidence" value="ECO:0007669"/>
    <property type="project" value="InterPro"/>
</dbReference>
<dbReference type="GO" id="GO:0019230">
    <property type="term" value="P:proprioception"/>
    <property type="evidence" value="ECO:0007669"/>
    <property type="project" value="EnsemblMetazoa"/>
</dbReference>
<dbReference type="CDD" id="cd22830">
    <property type="entry name" value="Gal_Rha_Lectin_dCirl"/>
    <property type="match status" value="1"/>
</dbReference>
<dbReference type="FunFam" id="2.60.120.740:FF:000001">
    <property type="entry name" value="Adhesion G protein-coupled receptor L2"/>
    <property type="match status" value="1"/>
</dbReference>
<dbReference type="FunFam" id="1.20.1070.10:FF:000322">
    <property type="entry name" value="latrophilin Cirl isoform X2"/>
    <property type="match status" value="1"/>
</dbReference>
<dbReference type="FunFam" id="1.25.40.610:FF:000006">
    <property type="entry name" value="latrophilin Cirl isoform X2"/>
    <property type="match status" value="1"/>
</dbReference>
<dbReference type="FunFam" id="2.60.220.50:FF:000024">
    <property type="entry name" value="latrophilin Cirl isoform X2"/>
    <property type="match status" value="1"/>
</dbReference>
<dbReference type="Gene3D" id="1.25.40.610">
    <property type="match status" value="1"/>
</dbReference>
<dbReference type="Gene3D" id="2.60.120.740">
    <property type="match status" value="1"/>
</dbReference>
<dbReference type="Gene3D" id="2.60.220.50">
    <property type="match status" value="1"/>
</dbReference>
<dbReference type="Gene3D" id="4.10.1240.10">
    <property type="entry name" value="GPCR, family 2, extracellular hormone receptor domain"/>
    <property type="match status" value="1"/>
</dbReference>
<dbReference type="Gene3D" id="1.20.1070.10">
    <property type="entry name" value="Rhodopsin 7-helix transmembrane proteins"/>
    <property type="match status" value="1"/>
</dbReference>
<dbReference type="InterPro" id="IPR057244">
    <property type="entry name" value="GAIN_B"/>
</dbReference>
<dbReference type="InterPro" id="IPR032471">
    <property type="entry name" value="GAIN_dom_N"/>
</dbReference>
<dbReference type="InterPro" id="IPR046338">
    <property type="entry name" value="GAIN_dom_sf"/>
</dbReference>
<dbReference type="InterPro" id="IPR017981">
    <property type="entry name" value="GPCR_2-like_7TM"/>
</dbReference>
<dbReference type="InterPro" id="IPR036445">
    <property type="entry name" value="GPCR_2_extracell_dom_sf"/>
</dbReference>
<dbReference type="InterPro" id="IPR000832">
    <property type="entry name" value="GPCR_2_secretin-like"/>
</dbReference>
<dbReference type="InterPro" id="IPR000203">
    <property type="entry name" value="GPS"/>
</dbReference>
<dbReference type="InterPro" id="IPR000922">
    <property type="entry name" value="Lectin_gal-bd_dom"/>
</dbReference>
<dbReference type="InterPro" id="IPR043159">
    <property type="entry name" value="Lectin_gal-bd_sf"/>
</dbReference>
<dbReference type="PANTHER" id="PTHR12011">
    <property type="entry name" value="ADHESION G-PROTEIN COUPLED RECEPTOR"/>
    <property type="match status" value="1"/>
</dbReference>
<dbReference type="PANTHER" id="PTHR12011:SF475">
    <property type="entry name" value="LATROPHILIN CIRL"/>
    <property type="match status" value="1"/>
</dbReference>
<dbReference type="Pfam" id="PF00002">
    <property type="entry name" value="7tm_2"/>
    <property type="match status" value="1"/>
</dbReference>
<dbReference type="Pfam" id="PF16489">
    <property type="entry name" value="GAIN"/>
    <property type="match status" value="1"/>
</dbReference>
<dbReference type="Pfam" id="PF01825">
    <property type="entry name" value="GPS"/>
    <property type="match status" value="1"/>
</dbReference>
<dbReference type="Pfam" id="PF02140">
    <property type="entry name" value="SUEL_Lectin"/>
    <property type="match status" value="1"/>
</dbReference>
<dbReference type="SMART" id="SM00303">
    <property type="entry name" value="GPS"/>
    <property type="match status" value="1"/>
</dbReference>
<dbReference type="SUPFAM" id="SSF81321">
    <property type="entry name" value="Family A G protein-coupled receptor-like"/>
    <property type="match status" value="1"/>
</dbReference>
<dbReference type="PROSITE" id="PS50261">
    <property type="entry name" value="G_PROTEIN_RECEP_F2_4"/>
    <property type="match status" value="1"/>
</dbReference>
<dbReference type="PROSITE" id="PS50221">
    <property type="entry name" value="GAIN_B"/>
    <property type="match status" value="1"/>
</dbReference>
<dbReference type="PROSITE" id="PS50228">
    <property type="entry name" value="SUEL_LECTIN"/>
    <property type="match status" value="1"/>
</dbReference>
<reference evidence="8" key="1">
    <citation type="journal article" date="2007" name="Nature">
        <title>Evolution of genes and genomes on the Drosophila phylogeny.</title>
        <authorList>
            <consortium name="Drosophila 12 genomes consortium"/>
        </authorList>
    </citation>
    <scope>NUCLEOTIDE SEQUENCE [LARGE SCALE GENOMIC DNA]</scope>
    <source>
        <strain evidence="8">Rob3c / Tucson 14021-0248.25</strain>
    </source>
</reference>
<feature type="chain" id="PRO_0000393379" description="Latrophilin Cirl">
    <location>
        <begin position="1"/>
        <end position="1693"/>
    </location>
</feature>
<feature type="topological domain" description="Extracellular" evidence="3">
    <location>
        <begin position="1"/>
        <end position="753"/>
    </location>
</feature>
<feature type="transmembrane region" description="Helical; Name=1" evidence="3">
    <location>
        <begin position="754"/>
        <end position="774"/>
    </location>
</feature>
<feature type="topological domain" description="Cytoplasmic" evidence="3">
    <location>
        <begin position="775"/>
        <end position="787"/>
    </location>
</feature>
<feature type="transmembrane region" description="Helical; Name=2" evidence="3">
    <location>
        <begin position="788"/>
        <end position="808"/>
    </location>
</feature>
<feature type="topological domain" description="Extracellular" evidence="3">
    <location>
        <begin position="809"/>
        <end position="814"/>
    </location>
</feature>
<feature type="transmembrane region" description="Helical; Name=3" evidence="3">
    <location>
        <begin position="815"/>
        <end position="835"/>
    </location>
</feature>
<feature type="topological domain" description="Cytoplasmic" evidence="3">
    <location>
        <begin position="836"/>
        <end position="861"/>
    </location>
</feature>
<feature type="transmembrane region" description="Helical; Name=4" evidence="3">
    <location>
        <begin position="862"/>
        <end position="882"/>
    </location>
</feature>
<feature type="topological domain" description="Extracellular" evidence="3">
    <location>
        <begin position="883"/>
        <end position="906"/>
    </location>
</feature>
<feature type="transmembrane region" description="Helical; Name=5" evidence="3">
    <location>
        <begin position="907"/>
        <end position="927"/>
    </location>
</feature>
<feature type="topological domain" description="Cytoplasmic" evidence="3">
    <location>
        <begin position="928"/>
        <end position="954"/>
    </location>
</feature>
<feature type="transmembrane region" description="Helical; Name=6" evidence="3">
    <location>
        <begin position="955"/>
        <end position="975"/>
    </location>
</feature>
<feature type="topological domain" description="Extracellular" evidence="3">
    <location>
        <begin position="976"/>
        <end position="985"/>
    </location>
</feature>
<feature type="transmembrane region" description="Helical; Name=7" evidence="3">
    <location>
        <begin position="986"/>
        <end position="1006"/>
    </location>
</feature>
<feature type="topological domain" description="Cytoplasmic" evidence="3">
    <location>
        <begin position="1007"/>
        <end position="1693"/>
    </location>
</feature>
<feature type="domain" description="SUEL-type lectin" evidence="5">
    <location>
        <begin position="25"/>
        <end position="114"/>
    </location>
</feature>
<feature type="domain" description="GAIN-B" evidence="4">
    <location>
        <begin position="564"/>
        <end position="740"/>
    </location>
</feature>
<feature type="region of interest" description="Disordered" evidence="6">
    <location>
        <begin position="185"/>
        <end position="299"/>
    </location>
</feature>
<feature type="region of interest" description="Disordered" evidence="6">
    <location>
        <begin position="375"/>
        <end position="399"/>
    </location>
</feature>
<feature type="region of interest" description="GPS" evidence="4">
    <location>
        <begin position="695"/>
        <end position="740"/>
    </location>
</feature>
<feature type="region of interest" description="Disordered" evidence="6">
    <location>
        <begin position="1156"/>
        <end position="1194"/>
    </location>
</feature>
<feature type="region of interest" description="Disordered" evidence="6">
    <location>
        <begin position="1220"/>
        <end position="1247"/>
    </location>
</feature>
<feature type="region of interest" description="Disordered" evidence="6">
    <location>
        <begin position="1294"/>
        <end position="1319"/>
    </location>
</feature>
<feature type="region of interest" description="Disordered" evidence="6">
    <location>
        <begin position="1433"/>
        <end position="1521"/>
    </location>
</feature>
<feature type="region of interest" description="Disordered" evidence="6">
    <location>
        <begin position="1601"/>
        <end position="1673"/>
    </location>
</feature>
<feature type="compositionally biased region" description="Polar residues" evidence="6">
    <location>
        <begin position="185"/>
        <end position="198"/>
    </location>
</feature>
<feature type="compositionally biased region" description="Polar residues" evidence="6">
    <location>
        <begin position="256"/>
        <end position="265"/>
    </location>
</feature>
<feature type="compositionally biased region" description="Low complexity" evidence="6">
    <location>
        <begin position="275"/>
        <end position="299"/>
    </location>
</feature>
<feature type="compositionally biased region" description="Low complexity" evidence="6">
    <location>
        <begin position="1294"/>
        <end position="1309"/>
    </location>
</feature>
<feature type="compositionally biased region" description="Low complexity" evidence="6">
    <location>
        <begin position="1439"/>
        <end position="1464"/>
    </location>
</feature>
<feature type="compositionally biased region" description="Acidic residues" evidence="6">
    <location>
        <begin position="1472"/>
        <end position="1486"/>
    </location>
</feature>
<feature type="compositionally biased region" description="Acidic residues" evidence="6">
    <location>
        <begin position="1496"/>
        <end position="1507"/>
    </location>
</feature>
<feature type="compositionally biased region" description="Basic and acidic residues" evidence="6">
    <location>
        <begin position="1508"/>
        <end position="1521"/>
    </location>
</feature>
<feature type="compositionally biased region" description="Low complexity" evidence="6">
    <location>
        <begin position="1630"/>
        <end position="1655"/>
    </location>
</feature>
<feature type="compositionally biased region" description="Basic residues" evidence="6">
    <location>
        <begin position="1656"/>
        <end position="1672"/>
    </location>
</feature>
<feature type="site" description="Cleavage; by autolysis" evidence="4">
    <location>
        <begin position="727"/>
        <end position="728"/>
    </location>
</feature>
<feature type="modified residue" description="Phosphoserine" evidence="1">
    <location>
        <position position="1142"/>
    </location>
</feature>
<feature type="modified residue" description="Phosphoserine" evidence="1">
    <location>
        <position position="1239"/>
    </location>
</feature>
<feature type="modified residue" description="Phosphoserine" evidence="1">
    <location>
        <position position="1246"/>
    </location>
</feature>
<feature type="modified residue" description="Phosphoserine" evidence="1">
    <location>
        <position position="1310"/>
    </location>
</feature>
<feature type="modified residue" description="Phosphoserine" evidence="1">
    <location>
        <position position="1311"/>
    </location>
</feature>
<feature type="glycosylation site" description="N-linked (GlcNAc...) asparagine" evidence="3">
    <location>
        <position position="142"/>
    </location>
</feature>
<feature type="glycosylation site" description="N-linked (GlcNAc...) asparagine" evidence="3">
    <location>
        <position position="256"/>
    </location>
</feature>
<feature type="glycosylation site" description="N-linked (GlcNAc...) asparagine" evidence="3">
    <location>
        <position position="301"/>
    </location>
</feature>
<feature type="glycosylation site" description="N-linked (GlcNAc...) asparagine" evidence="3">
    <location>
        <position position="340"/>
    </location>
</feature>
<feature type="glycosylation site" description="N-linked (GlcNAc...) asparagine" evidence="3">
    <location>
        <position position="397"/>
    </location>
</feature>
<feature type="glycosylation site" description="N-linked (GlcNAc...) asparagine" evidence="3">
    <location>
        <position position="641"/>
    </location>
</feature>
<feature type="glycosylation site" description="N-linked (GlcNAc...) asparagine" evidence="3">
    <location>
        <position position="689"/>
    </location>
</feature>
<feature type="glycosylation site" description="N-linked (GlcNAc...) asparagine" evidence="3">
    <location>
        <position position="716"/>
    </location>
</feature>
<feature type="disulfide bond" evidence="4">
    <location>
        <begin position="695"/>
        <end position="722"/>
    </location>
</feature>
<feature type="disulfide bond" evidence="4">
    <location>
        <begin position="710"/>
        <end position="724"/>
    </location>
</feature>
<keyword id="KW-1003">Cell membrane</keyword>
<keyword id="KW-1015">Disulfide bond</keyword>
<keyword id="KW-0297">G-protein coupled receptor</keyword>
<keyword id="KW-0325">Glycoprotein</keyword>
<keyword id="KW-0430">Lectin</keyword>
<keyword id="KW-0472">Membrane</keyword>
<keyword id="KW-0597">Phosphoprotein</keyword>
<keyword id="KW-0675">Receptor</keyword>
<keyword id="KW-1185">Reference proteome</keyword>
<keyword id="KW-0807">Transducer</keyword>
<keyword id="KW-0812">Transmembrane</keyword>
<keyword id="KW-1133">Transmembrane helix</keyword>
<proteinExistence type="inferred from homology"/>